<organism>
    <name type="scientific">Penicillium rubens (strain ATCC 28089 / DSM 1075 / NRRL 1951 / Wisconsin 54-1255)</name>
    <name type="common">Penicillium chrysogenum</name>
    <dbReference type="NCBI Taxonomy" id="500485"/>
    <lineage>
        <taxon>Eukaryota</taxon>
        <taxon>Fungi</taxon>
        <taxon>Dikarya</taxon>
        <taxon>Ascomycota</taxon>
        <taxon>Pezizomycotina</taxon>
        <taxon>Eurotiomycetes</taxon>
        <taxon>Eurotiomycetidae</taxon>
        <taxon>Eurotiales</taxon>
        <taxon>Aspergillaceae</taxon>
        <taxon>Penicillium</taxon>
        <taxon>Penicillium chrysogenum species complex</taxon>
    </lineage>
</organism>
<dbReference type="EC" id="1.-.-.-" evidence="4 5 6"/>
<dbReference type="EMBL" id="AM920436">
    <property type="protein sequence ID" value="CAP96442.1"/>
    <property type="molecule type" value="Genomic_DNA"/>
</dbReference>
<dbReference type="RefSeq" id="XP_002568555.1">
    <property type="nucleotide sequence ID" value="XM_002568509.1"/>
</dbReference>
<dbReference type="SMR" id="B6HJU3"/>
<dbReference type="STRING" id="500485.B6HJU3"/>
<dbReference type="GlyCosmos" id="B6HJU3">
    <property type="glycosylation" value="1 site, No reported glycans"/>
</dbReference>
<dbReference type="GeneID" id="8315546"/>
<dbReference type="KEGG" id="pcs:N7525_008084"/>
<dbReference type="VEuPathDB" id="FungiDB:PCH_Pc21g15450"/>
<dbReference type="eggNOG" id="KOG0157">
    <property type="taxonomic scope" value="Eukaryota"/>
</dbReference>
<dbReference type="HOGENOM" id="CLU_022195_0_3_1"/>
<dbReference type="OMA" id="RICEHPE"/>
<dbReference type="OrthoDB" id="1844152at2759"/>
<dbReference type="BioCyc" id="PCHR:PC21G15450-MONOMER"/>
<dbReference type="Proteomes" id="UP000000724">
    <property type="component" value="Contig Pc00c21"/>
</dbReference>
<dbReference type="GO" id="GO:0016020">
    <property type="term" value="C:membrane"/>
    <property type="evidence" value="ECO:0007669"/>
    <property type="project" value="UniProtKB-SubCell"/>
</dbReference>
<dbReference type="GO" id="GO:0020037">
    <property type="term" value="F:heme binding"/>
    <property type="evidence" value="ECO:0007669"/>
    <property type="project" value="InterPro"/>
</dbReference>
<dbReference type="GO" id="GO:0005506">
    <property type="term" value="F:iron ion binding"/>
    <property type="evidence" value="ECO:0007669"/>
    <property type="project" value="InterPro"/>
</dbReference>
<dbReference type="GO" id="GO:0004497">
    <property type="term" value="F:monooxygenase activity"/>
    <property type="evidence" value="ECO:0007669"/>
    <property type="project" value="UniProtKB-KW"/>
</dbReference>
<dbReference type="GO" id="GO:0016705">
    <property type="term" value="F:oxidoreductase activity, acting on paired donors, with incorporation or reduction of molecular oxygen"/>
    <property type="evidence" value="ECO:0007669"/>
    <property type="project" value="InterPro"/>
</dbReference>
<dbReference type="GO" id="GO:0043386">
    <property type="term" value="P:mycotoxin biosynthetic process"/>
    <property type="evidence" value="ECO:0007669"/>
    <property type="project" value="UniProtKB-ARBA"/>
</dbReference>
<dbReference type="CDD" id="cd11041">
    <property type="entry name" value="CYP503A1-like"/>
    <property type="match status" value="1"/>
</dbReference>
<dbReference type="Gene3D" id="1.10.630.10">
    <property type="entry name" value="Cytochrome P450"/>
    <property type="match status" value="1"/>
</dbReference>
<dbReference type="InterPro" id="IPR001128">
    <property type="entry name" value="Cyt_P450"/>
</dbReference>
<dbReference type="InterPro" id="IPR017972">
    <property type="entry name" value="Cyt_P450_CS"/>
</dbReference>
<dbReference type="InterPro" id="IPR002403">
    <property type="entry name" value="Cyt_P450_E_grp-IV"/>
</dbReference>
<dbReference type="InterPro" id="IPR036396">
    <property type="entry name" value="Cyt_P450_sf"/>
</dbReference>
<dbReference type="PANTHER" id="PTHR46206">
    <property type="entry name" value="CYTOCHROME P450"/>
    <property type="match status" value="1"/>
</dbReference>
<dbReference type="PANTHER" id="PTHR46206:SF3">
    <property type="entry name" value="P450, PUTATIVE (EUROFUNG)-RELATED"/>
    <property type="match status" value="1"/>
</dbReference>
<dbReference type="Pfam" id="PF00067">
    <property type="entry name" value="p450"/>
    <property type="match status" value="1"/>
</dbReference>
<dbReference type="PRINTS" id="PR00465">
    <property type="entry name" value="EP450IV"/>
</dbReference>
<dbReference type="SUPFAM" id="SSF48264">
    <property type="entry name" value="Cytochrome P450"/>
    <property type="match status" value="1"/>
</dbReference>
<dbReference type="PROSITE" id="PS00086">
    <property type="entry name" value="CYTOCHROME_P450"/>
    <property type="match status" value="1"/>
</dbReference>
<keyword id="KW-0325">Glycoprotein</keyword>
<keyword id="KW-0349">Heme</keyword>
<keyword id="KW-0408">Iron</keyword>
<keyword id="KW-0472">Membrane</keyword>
<keyword id="KW-0479">Metal-binding</keyword>
<keyword id="KW-0503">Monooxygenase</keyword>
<keyword id="KW-0560">Oxidoreductase</keyword>
<keyword id="KW-1185">Reference proteome</keyword>
<keyword id="KW-0812">Transmembrane</keyword>
<keyword id="KW-1133">Transmembrane helix</keyword>
<protein>
    <recommendedName>
        <fullName evidence="9">Cytochrome P450 monooxygenase roqO</fullName>
        <ecNumber evidence="4 5 6">1.-.-.-</ecNumber>
    </recommendedName>
    <alternativeName>
        <fullName evidence="8">Roquefortine/meleagrin synthesis protein O</fullName>
    </alternativeName>
</protein>
<comment type="function">
    <text evidence="4 5 6">Cytochrome P450 monooxygenase; part of the gene cluster that mediates the biosynthesis of the mycotoxin meleagrin (PubMed:22118684, PubMed:23776469). The first stage is catalyzed by the dipeptide synthase roqA which condenses histidine and tryptophan to produce histidyltryptophanyldiketopiperazine (HTD) (PubMed:22118684, PubMed:23776469). HTD is then converted to roquefortine C through two possible pathways (PubMed:23776469). In the first pathway, prenyltransferase roqD transforms HTD to the intermediate roquefortine D, which is in turn converted to roquefortine C by the cytochrome P450 monooxygenase roqR (PubMed:23776469). In the second pathway, HTD is first converted to the intermediate dehydrohistidyltryptophanyldi-ketopiperazine (DHTD) by roqR which is then prenylated by roqD to form roquefortine C (PubMed:23776469). Roquefortine C can be further transformed to meleagrin via three more reactions including oxydation to glandicolin A by roqM, which is further reduced to glandicoline B by roqO (PubMed:23776469). Finally, glandicoline B is converted to meleagrin by the glandicoline B O-methyltransferase roqN (PubMed:22118684, PubMed:23776469). More studies identified further branching and additional metabolites produced by the roquefortine/meleagrin cluster, including roquefortine F, roquefortine L, roquefortine M, roquefortine N and neoxaline (PubMed:24225953).</text>
</comment>
<comment type="cofactor">
    <cofactor evidence="1">
        <name>heme</name>
        <dbReference type="ChEBI" id="CHEBI:30413"/>
    </cofactor>
</comment>
<comment type="pathway">
    <text evidence="4 5 6">Alkaloid biosynthesis.</text>
</comment>
<comment type="subcellular location">
    <subcellularLocation>
        <location evidence="2">Membrane</location>
        <topology evidence="2">Single-pass membrane protein</topology>
    </subcellularLocation>
</comment>
<comment type="induction">
    <text evidence="5">Expression is decreased in presence of phenylacetic acid (PAA) (PubMed:23776469).</text>
</comment>
<comment type="disruption phenotype">
    <text evidence="5">Impairs the production of glandicoline B and meleagrin (PubMed:23776469).</text>
</comment>
<comment type="biotechnology">
    <text evidence="7">The indole alkaloid meleagrin was shown to be a good candidate to control c-Met-dependent breast cancer proliferation, migration and invasion (PubMed:26692349).</text>
</comment>
<comment type="similarity">
    <text evidence="9">Belongs to the cytochrome P450 family.</text>
</comment>
<name>ROQO_PENRW</name>
<evidence type="ECO:0000250" key="1">
    <source>
        <dbReference type="UniProtKB" id="P04798"/>
    </source>
</evidence>
<evidence type="ECO:0000255" key="2"/>
<evidence type="ECO:0000255" key="3">
    <source>
        <dbReference type="PROSITE-ProRule" id="PRU00498"/>
    </source>
</evidence>
<evidence type="ECO:0000269" key="4">
    <source>
    </source>
</evidence>
<evidence type="ECO:0000269" key="5">
    <source>
    </source>
</evidence>
<evidence type="ECO:0000269" key="6">
    <source>
    </source>
</evidence>
<evidence type="ECO:0000269" key="7">
    <source>
    </source>
</evidence>
<evidence type="ECO:0000303" key="8">
    <source>
    </source>
</evidence>
<evidence type="ECO:0000305" key="9"/>
<proteinExistence type="evidence at protein level"/>
<reference key="1">
    <citation type="journal article" date="2008" name="Nat. Biotechnol.">
        <title>Genome sequencing and analysis of the filamentous fungus Penicillium chrysogenum.</title>
        <authorList>
            <person name="van den Berg M.A."/>
            <person name="Albang R."/>
            <person name="Albermann K."/>
            <person name="Badger J.H."/>
            <person name="Daran J.-M."/>
            <person name="Driessen A.J.M."/>
            <person name="Garcia-Estrada C."/>
            <person name="Fedorova N.D."/>
            <person name="Harris D.M."/>
            <person name="Heijne W.H.M."/>
            <person name="Joardar V.S."/>
            <person name="Kiel J.A.K.W."/>
            <person name="Kovalchuk A."/>
            <person name="Martin J.F."/>
            <person name="Nierman W.C."/>
            <person name="Nijland J.G."/>
            <person name="Pronk J.T."/>
            <person name="Roubos J.A."/>
            <person name="van der Klei I.J."/>
            <person name="van Peij N.N.M.E."/>
            <person name="Veenhuis M."/>
            <person name="von Doehren H."/>
            <person name="Wagner C."/>
            <person name="Wortman J.R."/>
            <person name="Bovenberg R.A.L."/>
        </authorList>
    </citation>
    <scope>NUCLEOTIDE SEQUENCE [LARGE SCALE GENOMIC DNA]</scope>
    <source>
        <strain>ATCC 28089 / DSM 1075 / NRRL 1951 / Wisconsin 54-1255</strain>
    </source>
</reference>
<reference key="2">
    <citation type="journal article" date="2011" name="Chem. Biol.">
        <title>A single cluster of coregulated genes encodes the biosynthesis of the mycotoxins roquefortine C and meleagrin in Penicillium chrysogenum.</title>
        <authorList>
            <person name="Garcia-Estrada C."/>
            <person name="Ullan R.V."/>
            <person name="Albillos S.M."/>
            <person name="Fernandez-Bodega M.A."/>
            <person name="Durek P."/>
            <person name="von Doehren H."/>
            <person name="Martin J.F."/>
        </authorList>
    </citation>
    <scope>FUNCTION</scope>
</reference>
<reference key="3">
    <citation type="journal article" date="2013" name="J. Biol. Chem.">
        <title>Novel key metabolites reveal further branching of the roquefortine/meleagrin biosynthetic pathway.</title>
        <authorList>
            <person name="Ries M.I."/>
            <person name="Ali H."/>
            <person name="Lankhorst P.P."/>
            <person name="Hankemeier T."/>
            <person name="Bovenberg R.A."/>
            <person name="Driessen A.J."/>
            <person name="Vreeken R.J."/>
        </authorList>
    </citation>
    <scope>FUNCTION</scope>
    <scope>CATALYTIC ACTIVITY</scope>
</reference>
<reference key="4">
    <citation type="journal article" date="2013" name="PLoS ONE">
        <title>A branched biosynthetic pathway is involved in production of roquefortine and related compounds in Penicillium chrysogenum.</title>
        <authorList>
            <person name="Ali H."/>
            <person name="Ries M.I."/>
            <person name="Nijland J.G."/>
            <person name="Lankhorst P.P."/>
            <person name="Hankemeier T."/>
            <person name="Bovenberg R.A."/>
            <person name="Vreeken R.J."/>
            <person name="Driessen A.J."/>
        </authorList>
    </citation>
    <scope>FUNCTION</scope>
    <scope>CATALYTIC ACTIVITY</scope>
    <scope>INDUCTION</scope>
    <scope>DISRUPTION PHENOTYPE</scope>
</reference>
<reference key="5">
    <citation type="journal article" date="2016" name="Bioorg. Med. Chem.">
        <title>The indole alkaloid meleagrin, from the olive tree endophytic fungus Penicillium chrysogenum, as a novel lead for the control of c-Met-dependent breast cancer proliferation, migration and invasion.</title>
        <authorList>
            <person name="Mady M.S."/>
            <person name="Mohyeldin M.M."/>
            <person name="Ebrahim H.Y."/>
            <person name="Elsayed H.E."/>
            <person name="Houssen W.E."/>
            <person name="Haggag E.G."/>
            <person name="Soliman R.F."/>
            <person name="El Sayed K.A."/>
        </authorList>
    </citation>
    <scope>BIOTECHNOLOGY</scope>
</reference>
<sequence length="503" mass="57477">MDVVARFMVSYSGTACAISLFIFGITLLFPFHKSQSFVCMNSHSWDIFRNKAKREFESNAEKLIKDALRKGLTAFQLVTNMGTYLILADQYAEELRNDKRLSAYDALNDVILLELPGLETMFQGSLHNHVSPTAIHAMNRELVHLTRALSDEANHRLQTQWTDSSEWHTVSIHDTVLALVAQMTTRAFVGAELCRNAEWLDIAINFTINRAIAVQAVQAWPWILQPVVHWFLPTCKAVRRQIQRARTILMPVLERERQTMHRKDSSSDRIFSTLTFIDQYAQGSRYDATMAQLRLTAVSVLTTSDMVEKVLARICEHPELIQPLREEVVSVFESSGLHHKSLLKLTLMESVMKESQRLEPATLISMFRAAKKTVTLQDGTTIPKGTRLAFANDLRLDPELYPDPETFDGYRFERMRKDPEQAKLAPFTKTRTSHLAFGHGKHACPGRFLSCDEAKLILCHILLKYDFKALDGRVPDLHVRSMFIQRDTGGMLSVRRRQEEVTL</sequence>
<gene>
    <name evidence="8" type="primary">roqO</name>
    <name type="ORF">Pc21g15450</name>
</gene>
<feature type="chain" id="PRO_0000436347" description="Cytochrome P450 monooxygenase roqO">
    <location>
        <begin position="1"/>
        <end position="503"/>
    </location>
</feature>
<feature type="transmembrane region" description="Helical" evidence="2">
    <location>
        <begin position="11"/>
        <end position="31"/>
    </location>
</feature>
<feature type="binding site" description="axial binding residue" evidence="1">
    <location>
        <position position="444"/>
    </location>
    <ligand>
        <name>heme</name>
        <dbReference type="ChEBI" id="CHEBI:30413"/>
    </ligand>
    <ligandPart>
        <name>Fe</name>
        <dbReference type="ChEBI" id="CHEBI:18248"/>
    </ligandPart>
</feature>
<feature type="glycosylation site" description="N-linked (GlcNAc...) asparagine" evidence="3">
    <location>
        <position position="205"/>
    </location>
</feature>
<accession>B6HJU3</accession>